<proteinExistence type="inferred from homology"/>
<gene>
    <name type="primary">ATG33</name>
    <name type="ordered locus">CAGL0B02860g</name>
</gene>
<evidence type="ECO:0000250" key="1"/>
<evidence type="ECO:0000255" key="2"/>
<evidence type="ECO:0000305" key="3"/>
<reference key="1">
    <citation type="journal article" date="2004" name="Nature">
        <title>Genome evolution in yeasts.</title>
        <authorList>
            <person name="Dujon B."/>
            <person name="Sherman D."/>
            <person name="Fischer G."/>
            <person name="Durrens P."/>
            <person name="Casaregola S."/>
            <person name="Lafontaine I."/>
            <person name="de Montigny J."/>
            <person name="Marck C."/>
            <person name="Neuveglise C."/>
            <person name="Talla E."/>
            <person name="Goffard N."/>
            <person name="Frangeul L."/>
            <person name="Aigle M."/>
            <person name="Anthouard V."/>
            <person name="Babour A."/>
            <person name="Barbe V."/>
            <person name="Barnay S."/>
            <person name="Blanchin S."/>
            <person name="Beckerich J.-M."/>
            <person name="Beyne E."/>
            <person name="Bleykasten C."/>
            <person name="Boisrame A."/>
            <person name="Boyer J."/>
            <person name="Cattolico L."/>
            <person name="Confanioleri F."/>
            <person name="de Daruvar A."/>
            <person name="Despons L."/>
            <person name="Fabre E."/>
            <person name="Fairhead C."/>
            <person name="Ferry-Dumazet H."/>
            <person name="Groppi A."/>
            <person name="Hantraye F."/>
            <person name="Hennequin C."/>
            <person name="Jauniaux N."/>
            <person name="Joyet P."/>
            <person name="Kachouri R."/>
            <person name="Kerrest A."/>
            <person name="Koszul R."/>
            <person name="Lemaire M."/>
            <person name="Lesur I."/>
            <person name="Ma L."/>
            <person name="Muller H."/>
            <person name="Nicaud J.-M."/>
            <person name="Nikolski M."/>
            <person name="Oztas S."/>
            <person name="Ozier-Kalogeropoulos O."/>
            <person name="Pellenz S."/>
            <person name="Potier S."/>
            <person name="Richard G.-F."/>
            <person name="Straub M.-L."/>
            <person name="Suleau A."/>
            <person name="Swennen D."/>
            <person name="Tekaia F."/>
            <person name="Wesolowski-Louvel M."/>
            <person name="Westhof E."/>
            <person name="Wirth B."/>
            <person name="Zeniou-Meyer M."/>
            <person name="Zivanovic Y."/>
            <person name="Bolotin-Fukuhara M."/>
            <person name="Thierry A."/>
            <person name="Bouchier C."/>
            <person name="Caudron B."/>
            <person name="Scarpelli C."/>
            <person name="Gaillardin C."/>
            <person name="Weissenbach J."/>
            <person name="Wincker P."/>
            <person name="Souciet J.-L."/>
        </authorList>
    </citation>
    <scope>NUCLEOTIDE SEQUENCE [LARGE SCALE GENOMIC DNA]</scope>
    <source>
        <strain>ATCC 2001 / BCRC 20586 / JCM 3761 / NBRC 0622 / NRRL Y-65 / CBS 138</strain>
    </source>
</reference>
<sequence length="216" mass="23001">MSTCLTVTKGIAISSLGLYAGIVSAGTLLVVNDRVTPTNDSKHDLVRTLLCKVGTGLNVVATVVFGLVYFSSPGYARHPYLVYAALTGPATSLYMFLSKRYWLKQLRNLKETKITDEKHSPPPVGQDAAQTSDKAEISYAAAAAVGAENGGELSESVVDLGIEKTIAQAEKDFEKQKADEVVRRETQSIKVRAVATAVIATVGFIQSVIGVSGEHL</sequence>
<comment type="function">
    <text evidence="1">Involved in the selective degradation of mitochondria via autophagy during starvation and at post-log phase.</text>
</comment>
<comment type="subcellular location">
    <subcellularLocation>
        <location evidence="3">Mitochondrion membrane</location>
        <topology evidence="3">Multi-pass membrane protein</topology>
    </subcellularLocation>
</comment>
<comment type="similarity">
    <text evidence="3">Belongs to the ATG33 family.</text>
</comment>
<protein>
    <recommendedName>
        <fullName>Autophagy-related protein 33</fullName>
    </recommendedName>
</protein>
<dbReference type="EMBL" id="CR380948">
    <property type="protein sequence ID" value="CAG57996.1"/>
    <property type="molecule type" value="Genomic_DNA"/>
</dbReference>
<dbReference type="RefSeq" id="XP_445096.1">
    <property type="nucleotide sequence ID" value="XM_445096.1"/>
</dbReference>
<dbReference type="SMR" id="Q6FXH5"/>
<dbReference type="FunCoup" id="Q6FXH5">
    <property type="interactions" value="137"/>
</dbReference>
<dbReference type="STRING" id="284593.Q6FXH5"/>
<dbReference type="EnsemblFungi" id="CAGL0B02860g-T">
    <property type="protein sequence ID" value="CAGL0B02860g-T-p1"/>
    <property type="gene ID" value="CAGL0B02860g"/>
</dbReference>
<dbReference type="KEGG" id="cgr:2886662"/>
<dbReference type="CGD" id="CAL0127044">
    <property type="gene designation" value="CAGL0B02860g"/>
</dbReference>
<dbReference type="VEuPathDB" id="FungiDB:CAGL0B02860g"/>
<dbReference type="eggNOG" id="ENOG502S27M">
    <property type="taxonomic scope" value="Eukaryota"/>
</dbReference>
<dbReference type="HOGENOM" id="CLU_105986_1_0_1"/>
<dbReference type="InParanoid" id="Q6FXH5"/>
<dbReference type="Proteomes" id="UP000002428">
    <property type="component" value="Chromosome B"/>
</dbReference>
<dbReference type="GO" id="GO:0005741">
    <property type="term" value="C:mitochondrial outer membrane"/>
    <property type="evidence" value="ECO:0007669"/>
    <property type="project" value="TreeGrafter"/>
</dbReference>
<dbReference type="GO" id="GO:0000422">
    <property type="term" value="P:autophagy of mitochondrion"/>
    <property type="evidence" value="ECO:0007669"/>
    <property type="project" value="TreeGrafter"/>
</dbReference>
<dbReference type="GO" id="GO:0016236">
    <property type="term" value="P:macroautophagy"/>
    <property type="evidence" value="ECO:0007669"/>
    <property type="project" value="TreeGrafter"/>
</dbReference>
<dbReference type="InterPro" id="IPR051668">
    <property type="entry name" value="ATG33"/>
</dbReference>
<dbReference type="PANTHER" id="PTHR37278">
    <property type="entry name" value="AUTOPHAGY-RELATED PROTEIN 33-RELATED"/>
    <property type="match status" value="1"/>
</dbReference>
<dbReference type="PANTHER" id="PTHR37278:SF1">
    <property type="entry name" value="AUTOPHAGY-RELATED PROTEIN 33-RELATED"/>
    <property type="match status" value="1"/>
</dbReference>
<keyword id="KW-0072">Autophagy</keyword>
<keyword id="KW-0472">Membrane</keyword>
<keyword id="KW-0496">Mitochondrion</keyword>
<keyword id="KW-1185">Reference proteome</keyword>
<keyword id="KW-0812">Transmembrane</keyword>
<keyword id="KW-1133">Transmembrane helix</keyword>
<organism>
    <name type="scientific">Candida glabrata (strain ATCC 2001 / BCRC 20586 / JCM 3761 / NBRC 0622 / NRRL Y-65 / CBS 138)</name>
    <name type="common">Yeast</name>
    <name type="synonym">Nakaseomyces glabratus</name>
    <dbReference type="NCBI Taxonomy" id="284593"/>
    <lineage>
        <taxon>Eukaryota</taxon>
        <taxon>Fungi</taxon>
        <taxon>Dikarya</taxon>
        <taxon>Ascomycota</taxon>
        <taxon>Saccharomycotina</taxon>
        <taxon>Saccharomycetes</taxon>
        <taxon>Saccharomycetales</taxon>
        <taxon>Saccharomycetaceae</taxon>
        <taxon>Nakaseomyces</taxon>
    </lineage>
</organism>
<feature type="chain" id="PRO_0000399766" description="Autophagy-related protein 33">
    <location>
        <begin position="1"/>
        <end position="216"/>
    </location>
</feature>
<feature type="transmembrane region" description="Helical" evidence="2">
    <location>
        <begin position="11"/>
        <end position="31"/>
    </location>
</feature>
<feature type="transmembrane region" description="Helical" evidence="2">
    <location>
        <begin position="50"/>
        <end position="70"/>
    </location>
</feature>
<feature type="transmembrane region" description="Helical" evidence="2">
    <location>
        <begin position="78"/>
        <end position="98"/>
    </location>
</feature>
<feature type="transmembrane region" description="Helical" evidence="2">
    <location>
        <begin position="193"/>
        <end position="213"/>
    </location>
</feature>
<name>ATG33_CANGA</name>
<accession>Q6FXH5</accession>